<protein>
    <recommendedName>
        <fullName evidence="1">Small ribosomal subunit protein uS5</fullName>
    </recommendedName>
    <alternativeName>
        <fullName evidence="2">30S ribosomal protein S5</fullName>
    </alternativeName>
</protein>
<evidence type="ECO:0000255" key="1">
    <source>
        <dbReference type="HAMAP-Rule" id="MF_01307"/>
    </source>
</evidence>
<evidence type="ECO:0000305" key="2"/>
<dbReference type="EMBL" id="AE017198">
    <property type="protein sequence ID" value="AAS08342.1"/>
    <property type="molecule type" value="Genomic_DNA"/>
</dbReference>
<dbReference type="RefSeq" id="WP_003647820.1">
    <property type="nucleotide sequence ID" value="NC_005362.1"/>
</dbReference>
<dbReference type="SMR" id="Q74L73"/>
<dbReference type="GeneID" id="83569771"/>
<dbReference type="KEGG" id="ljo:LJ_0354"/>
<dbReference type="eggNOG" id="COG0098">
    <property type="taxonomic scope" value="Bacteria"/>
</dbReference>
<dbReference type="HOGENOM" id="CLU_065898_2_2_9"/>
<dbReference type="Proteomes" id="UP000000581">
    <property type="component" value="Chromosome"/>
</dbReference>
<dbReference type="GO" id="GO:0015935">
    <property type="term" value="C:small ribosomal subunit"/>
    <property type="evidence" value="ECO:0007669"/>
    <property type="project" value="InterPro"/>
</dbReference>
<dbReference type="GO" id="GO:0019843">
    <property type="term" value="F:rRNA binding"/>
    <property type="evidence" value="ECO:0007669"/>
    <property type="project" value="UniProtKB-UniRule"/>
</dbReference>
<dbReference type="GO" id="GO:0003735">
    <property type="term" value="F:structural constituent of ribosome"/>
    <property type="evidence" value="ECO:0007669"/>
    <property type="project" value="InterPro"/>
</dbReference>
<dbReference type="GO" id="GO:0006412">
    <property type="term" value="P:translation"/>
    <property type="evidence" value="ECO:0007669"/>
    <property type="project" value="UniProtKB-UniRule"/>
</dbReference>
<dbReference type="FunFam" id="3.30.160.20:FF:000001">
    <property type="entry name" value="30S ribosomal protein S5"/>
    <property type="match status" value="1"/>
</dbReference>
<dbReference type="FunFam" id="3.30.230.10:FF:000002">
    <property type="entry name" value="30S ribosomal protein S5"/>
    <property type="match status" value="1"/>
</dbReference>
<dbReference type="Gene3D" id="3.30.160.20">
    <property type="match status" value="1"/>
</dbReference>
<dbReference type="Gene3D" id="3.30.230.10">
    <property type="match status" value="1"/>
</dbReference>
<dbReference type="HAMAP" id="MF_01307_B">
    <property type="entry name" value="Ribosomal_uS5_B"/>
    <property type="match status" value="1"/>
</dbReference>
<dbReference type="InterPro" id="IPR020568">
    <property type="entry name" value="Ribosomal_Su5_D2-typ_SF"/>
</dbReference>
<dbReference type="InterPro" id="IPR000851">
    <property type="entry name" value="Ribosomal_uS5"/>
</dbReference>
<dbReference type="InterPro" id="IPR005712">
    <property type="entry name" value="Ribosomal_uS5_bac-type"/>
</dbReference>
<dbReference type="InterPro" id="IPR005324">
    <property type="entry name" value="Ribosomal_uS5_C"/>
</dbReference>
<dbReference type="InterPro" id="IPR013810">
    <property type="entry name" value="Ribosomal_uS5_N"/>
</dbReference>
<dbReference type="InterPro" id="IPR018192">
    <property type="entry name" value="Ribosomal_uS5_N_CS"/>
</dbReference>
<dbReference type="InterPro" id="IPR014721">
    <property type="entry name" value="Ribsml_uS5_D2-typ_fold_subgr"/>
</dbReference>
<dbReference type="NCBIfam" id="TIGR01021">
    <property type="entry name" value="rpsE_bact"/>
    <property type="match status" value="1"/>
</dbReference>
<dbReference type="PANTHER" id="PTHR48277">
    <property type="entry name" value="MITOCHONDRIAL RIBOSOMAL PROTEIN S5"/>
    <property type="match status" value="1"/>
</dbReference>
<dbReference type="PANTHER" id="PTHR48277:SF1">
    <property type="entry name" value="MITOCHONDRIAL RIBOSOMAL PROTEIN S5"/>
    <property type="match status" value="1"/>
</dbReference>
<dbReference type="Pfam" id="PF00333">
    <property type="entry name" value="Ribosomal_S5"/>
    <property type="match status" value="1"/>
</dbReference>
<dbReference type="Pfam" id="PF03719">
    <property type="entry name" value="Ribosomal_S5_C"/>
    <property type="match status" value="1"/>
</dbReference>
<dbReference type="SUPFAM" id="SSF54768">
    <property type="entry name" value="dsRNA-binding domain-like"/>
    <property type="match status" value="1"/>
</dbReference>
<dbReference type="SUPFAM" id="SSF54211">
    <property type="entry name" value="Ribosomal protein S5 domain 2-like"/>
    <property type="match status" value="1"/>
</dbReference>
<dbReference type="PROSITE" id="PS00585">
    <property type="entry name" value="RIBOSOMAL_S5"/>
    <property type="match status" value="1"/>
</dbReference>
<dbReference type="PROSITE" id="PS50881">
    <property type="entry name" value="S5_DSRBD"/>
    <property type="match status" value="1"/>
</dbReference>
<reference key="1">
    <citation type="journal article" date="2004" name="Proc. Natl. Acad. Sci. U.S.A.">
        <title>The genome sequence of the probiotic intestinal bacterium Lactobacillus johnsonii NCC 533.</title>
        <authorList>
            <person name="Pridmore R.D."/>
            <person name="Berger B."/>
            <person name="Desiere F."/>
            <person name="Vilanova D."/>
            <person name="Barretto C."/>
            <person name="Pittet A.-C."/>
            <person name="Zwahlen M.-C."/>
            <person name="Rouvet M."/>
            <person name="Altermann E."/>
            <person name="Barrangou R."/>
            <person name="Mollet B."/>
            <person name="Mercenier A."/>
            <person name="Klaenhammer T."/>
            <person name="Arigoni F."/>
            <person name="Schell M.A."/>
        </authorList>
    </citation>
    <scope>NUCLEOTIDE SEQUENCE [LARGE SCALE GENOMIC DNA]</scope>
    <source>
        <strain>CNCM I-1225 / La1 / NCC 533</strain>
    </source>
</reference>
<proteinExistence type="inferred from homology"/>
<sequence length="174" mass="18717">MANRNDSRRDSRKDRKKDDIEDQLVAINRITKVVKGGRRMRFAAVVIVGDRKGHVGFGTGKAQEVPEAIRKAVEAGKKRMIKVPTVGTTIPHEVMGHYGSGNIMLKPAEAGSGVAAGGAVRIIMDLAGISDVTSKSLGSNTPINVIRATMDGLSKLKTREDVLKLRESAKSLED</sequence>
<organism>
    <name type="scientific">Lactobacillus johnsonii (strain CNCM I-12250 / La1 / NCC 533)</name>
    <dbReference type="NCBI Taxonomy" id="257314"/>
    <lineage>
        <taxon>Bacteria</taxon>
        <taxon>Bacillati</taxon>
        <taxon>Bacillota</taxon>
        <taxon>Bacilli</taxon>
        <taxon>Lactobacillales</taxon>
        <taxon>Lactobacillaceae</taxon>
        <taxon>Lactobacillus</taxon>
    </lineage>
</organism>
<feature type="chain" id="PRO_0000131529" description="Small ribosomal subunit protein uS5">
    <location>
        <begin position="1"/>
        <end position="174"/>
    </location>
</feature>
<feature type="domain" description="S5 DRBM" evidence="1">
    <location>
        <begin position="20"/>
        <end position="83"/>
    </location>
</feature>
<comment type="function">
    <text evidence="1">With S4 and S12 plays an important role in translational accuracy.</text>
</comment>
<comment type="function">
    <text evidence="1">Located at the back of the 30S subunit body where it stabilizes the conformation of the head with respect to the body.</text>
</comment>
<comment type="subunit">
    <text evidence="1">Part of the 30S ribosomal subunit. Contacts proteins S4 and S8.</text>
</comment>
<comment type="domain">
    <text>The N-terminal domain interacts with the head of the 30S subunit; the C-terminal domain interacts with the body and contacts protein S4. The interaction surface between S4 and S5 is involved in control of translational fidelity.</text>
</comment>
<comment type="similarity">
    <text evidence="1">Belongs to the universal ribosomal protein uS5 family.</text>
</comment>
<name>RS5_LACJO</name>
<keyword id="KW-0687">Ribonucleoprotein</keyword>
<keyword id="KW-0689">Ribosomal protein</keyword>
<keyword id="KW-0694">RNA-binding</keyword>
<keyword id="KW-0699">rRNA-binding</keyword>
<accession>Q74L73</accession>
<gene>
    <name evidence="1" type="primary">rpsE</name>
    <name type="ordered locus">LJ_0354</name>
</gene>